<comment type="function">
    <text evidence="1">Catalyzes the radical-mediated insertion of two sulfur atoms into the C-6 and C-8 positions of the octanoyl moiety bound to the lipoyl domains of lipoate-dependent enzymes, thereby converting the octanoylated domains into lipoylated derivatives.</text>
</comment>
<comment type="catalytic activity">
    <reaction evidence="1">
        <text>[[Fe-S] cluster scaffold protein carrying a second [4Fe-4S](2+) cluster] + N(6)-octanoyl-L-lysyl-[protein] + 2 oxidized [2Fe-2S]-[ferredoxin] + 2 S-adenosyl-L-methionine + 4 H(+) = [[Fe-S] cluster scaffold protein] + N(6)-[(R)-dihydrolipoyl]-L-lysyl-[protein] + 4 Fe(3+) + 2 hydrogen sulfide + 2 5'-deoxyadenosine + 2 L-methionine + 2 reduced [2Fe-2S]-[ferredoxin]</text>
        <dbReference type="Rhea" id="RHEA:16585"/>
        <dbReference type="Rhea" id="RHEA-COMP:9928"/>
        <dbReference type="Rhea" id="RHEA-COMP:10000"/>
        <dbReference type="Rhea" id="RHEA-COMP:10001"/>
        <dbReference type="Rhea" id="RHEA-COMP:10475"/>
        <dbReference type="Rhea" id="RHEA-COMP:14568"/>
        <dbReference type="Rhea" id="RHEA-COMP:14569"/>
        <dbReference type="ChEBI" id="CHEBI:15378"/>
        <dbReference type="ChEBI" id="CHEBI:17319"/>
        <dbReference type="ChEBI" id="CHEBI:29034"/>
        <dbReference type="ChEBI" id="CHEBI:29919"/>
        <dbReference type="ChEBI" id="CHEBI:33722"/>
        <dbReference type="ChEBI" id="CHEBI:33737"/>
        <dbReference type="ChEBI" id="CHEBI:33738"/>
        <dbReference type="ChEBI" id="CHEBI:57844"/>
        <dbReference type="ChEBI" id="CHEBI:59789"/>
        <dbReference type="ChEBI" id="CHEBI:78809"/>
        <dbReference type="ChEBI" id="CHEBI:83100"/>
        <dbReference type="EC" id="2.8.1.8"/>
    </reaction>
</comment>
<comment type="cofactor">
    <cofactor evidence="1">
        <name>[4Fe-4S] cluster</name>
        <dbReference type="ChEBI" id="CHEBI:49883"/>
    </cofactor>
    <text evidence="1">Binds 2 [4Fe-4S] clusters per subunit. One cluster is coordinated with 3 cysteines and an exchangeable S-adenosyl-L-methionine.</text>
</comment>
<comment type="pathway">
    <text evidence="1">Protein modification; protein lipoylation via endogenous pathway; protein N(6)-(lipoyl)lysine from octanoyl-[acyl-carrier-protein]: step 2/2.</text>
</comment>
<comment type="subcellular location">
    <subcellularLocation>
        <location>Plastid</location>
        <location>Chloroplast</location>
    </subcellularLocation>
</comment>
<comment type="miscellaneous">
    <text evidence="1">This protein may be expected to contain an N-terminal transit peptide but none has been predicted.</text>
</comment>
<comment type="similarity">
    <text evidence="1">Belongs to the radical SAM superfamily. Lipoyl synthase family.</text>
</comment>
<protein>
    <recommendedName>
        <fullName>Lipoyl synthase 1, chloroplastic</fullName>
        <ecNumber evidence="1">2.8.1.8</ecNumber>
    </recommendedName>
    <alternativeName>
        <fullName evidence="1">Lipoate synthase 1</fullName>
        <shortName evidence="1">LS 1</shortName>
        <shortName evidence="1">Lip-syn 1</shortName>
    </alternativeName>
    <alternativeName>
        <fullName evidence="1">Lipoate synthase, plastidial 1</fullName>
        <shortName evidence="1">LIP1p 1</shortName>
    </alternativeName>
    <alternativeName>
        <fullName evidence="1">Lipoic acid synthase 1</fullName>
    </alternativeName>
</protein>
<keyword id="KW-0004">4Fe-4S</keyword>
<keyword id="KW-0150">Chloroplast</keyword>
<keyword id="KW-0408">Iron</keyword>
<keyword id="KW-0411">Iron-sulfur</keyword>
<keyword id="KW-0479">Metal-binding</keyword>
<keyword id="KW-0934">Plastid</keyword>
<keyword id="KW-1185">Reference proteome</keyword>
<keyword id="KW-0949">S-adenosyl-L-methionine</keyword>
<keyword id="KW-0808">Transferase</keyword>
<organism>
    <name type="scientific">Zea mays</name>
    <name type="common">Maize</name>
    <dbReference type="NCBI Taxonomy" id="4577"/>
    <lineage>
        <taxon>Eukaryota</taxon>
        <taxon>Viridiplantae</taxon>
        <taxon>Streptophyta</taxon>
        <taxon>Embryophyta</taxon>
        <taxon>Tracheophyta</taxon>
        <taxon>Spermatophyta</taxon>
        <taxon>Magnoliopsida</taxon>
        <taxon>Liliopsida</taxon>
        <taxon>Poales</taxon>
        <taxon>Poaceae</taxon>
        <taxon>PACMAD clade</taxon>
        <taxon>Panicoideae</taxon>
        <taxon>Andropogonodae</taxon>
        <taxon>Andropogoneae</taxon>
        <taxon>Tripsacinae</taxon>
        <taxon>Zea</taxon>
    </lineage>
</organism>
<sequence>MQSSLARPLRPPVLAGRGGRRGLVAVARCHAEAAPPVGTASRAPAGPYTGRDPEVKKPAWLRQRAAQGEKYARLRESIGELKLNTVCVEAQCPNIGECWNGGGGAGGEGDGIATATIMVLGDTCTRGCRFCAVKTSNKPPPPDPLEPLNTALAVASWGVDYVVLTSVDRDDLPDGGSSHFAQTVKALKELKPGILVECLTSDFRGDLEAISSLASSGLDVYAHNIETVRSLQRIVRDPRAGYDQSLAVLKHAKACREGMVTKSSIMLGLGETDEEVKQAMMDLRAIGVDILTLGQYLQPTERHLTVREYVTPEKFQFWKEYGESVGFRYVASGPLVRSSYRAGELFVQNLVRNNKTGSSSS</sequence>
<dbReference type="EC" id="2.8.1.8" evidence="1"/>
<dbReference type="EMBL" id="EU966377">
    <property type="protein sequence ID" value="ACG38495.1"/>
    <property type="molecule type" value="mRNA"/>
</dbReference>
<dbReference type="RefSeq" id="NP_001150279.1">
    <property type="nucleotide sequence ID" value="NM_001156807.1"/>
</dbReference>
<dbReference type="SMR" id="B6TN12"/>
<dbReference type="FunCoup" id="B6TN12">
    <property type="interactions" value="1408"/>
</dbReference>
<dbReference type="STRING" id="4577.B6TN12"/>
<dbReference type="PaxDb" id="4577-GRMZM2G039982_P01"/>
<dbReference type="GeneID" id="100283909"/>
<dbReference type="KEGG" id="zma:100283909"/>
<dbReference type="eggNOG" id="KOG2672">
    <property type="taxonomic scope" value="Eukaryota"/>
</dbReference>
<dbReference type="InParanoid" id="B6TN12"/>
<dbReference type="OrthoDB" id="3231at2759"/>
<dbReference type="UniPathway" id="UPA00538">
    <property type="reaction ID" value="UER00593"/>
</dbReference>
<dbReference type="Proteomes" id="UP000007305">
    <property type="component" value="Unplaced"/>
</dbReference>
<dbReference type="ExpressionAtlas" id="B6TN12">
    <property type="expression patterns" value="baseline and differential"/>
</dbReference>
<dbReference type="GO" id="GO:0009507">
    <property type="term" value="C:chloroplast"/>
    <property type="evidence" value="ECO:0007669"/>
    <property type="project" value="UniProtKB-SubCell"/>
</dbReference>
<dbReference type="GO" id="GO:0005739">
    <property type="term" value="C:mitochondrion"/>
    <property type="evidence" value="ECO:0000318"/>
    <property type="project" value="GO_Central"/>
</dbReference>
<dbReference type="GO" id="GO:0051539">
    <property type="term" value="F:4 iron, 4 sulfur cluster binding"/>
    <property type="evidence" value="ECO:0007669"/>
    <property type="project" value="UniProtKB-UniRule"/>
</dbReference>
<dbReference type="GO" id="GO:0016992">
    <property type="term" value="F:lipoate synthase activity"/>
    <property type="evidence" value="ECO:0000318"/>
    <property type="project" value="GO_Central"/>
</dbReference>
<dbReference type="GO" id="GO:0046872">
    <property type="term" value="F:metal ion binding"/>
    <property type="evidence" value="ECO:0007669"/>
    <property type="project" value="UniProtKB-KW"/>
</dbReference>
<dbReference type="GO" id="GO:0009107">
    <property type="term" value="P:lipoate biosynthetic process"/>
    <property type="evidence" value="ECO:0000318"/>
    <property type="project" value="GO_Central"/>
</dbReference>
<dbReference type="CDD" id="cd01335">
    <property type="entry name" value="Radical_SAM"/>
    <property type="match status" value="1"/>
</dbReference>
<dbReference type="FunFam" id="3.20.20.70:FF:000036">
    <property type="entry name" value="Lipoyl synthase, mitochondrial"/>
    <property type="match status" value="1"/>
</dbReference>
<dbReference type="Gene3D" id="3.20.20.70">
    <property type="entry name" value="Aldolase class I"/>
    <property type="match status" value="1"/>
</dbReference>
<dbReference type="HAMAP" id="MF_00206">
    <property type="entry name" value="Lipoyl_synth"/>
    <property type="match status" value="1"/>
</dbReference>
<dbReference type="HAMAP" id="MF_03129">
    <property type="entry name" value="Lipoyl_synth_plantC"/>
    <property type="match status" value="1"/>
</dbReference>
<dbReference type="InterPro" id="IPR013785">
    <property type="entry name" value="Aldolase_TIM"/>
</dbReference>
<dbReference type="InterPro" id="IPR006638">
    <property type="entry name" value="Elp3/MiaA/NifB-like_rSAM"/>
</dbReference>
<dbReference type="InterPro" id="IPR003698">
    <property type="entry name" value="Lipoyl_synth"/>
</dbReference>
<dbReference type="InterPro" id="IPR027526">
    <property type="entry name" value="Lipoyl_synth_chlpt"/>
</dbReference>
<dbReference type="InterPro" id="IPR007197">
    <property type="entry name" value="rSAM"/>
</dbReference>
<dbReference type="NCBIfam" id="TIGR00510">
    <property type="entry name" value="lipA"/>
    <property type="match status" value="1"/>
</dbReference>
<dbReference type="NCBIfam" id="NF004019">
    <property type="entry name" value="PRK05481.1"/>
    <property type="match status" value="1"/>
</dbReference>
<dbReference type="NCBIfam" id="NF009544">
    <property type="entry name" value="PRK12928.1"/>
    <property type="match status" value="1"/>
</dbReference>
<dbReference type="PANTHER" id="PTHR10949">
    <property type="entry name" value="LIPOYL SYNTHASE"/>
    <property type="match status" value="1"/>
</dbReference>
<dbReference type="PANTHER" id="PTHR10949:SF31">
    <property type="entry name" value="LIPOYL SYNTHASE 1, CHLOROPLASTIC"/>
    <property type="match status" value="1"/>
</dbReference>
<dbReference type="Pfam" id="PF04055">
    <property type="entry name" value="Radical_SAM"/>
    <property type="match status" value="1"/>
</dbReference>
<dbReference type="PIRSF" id="PIRSF005963">
    <property type="entry name" value="Lipoyl_synth"/>
    <property type="match status" value="1"/>
</dbReference>
<dbReference type="SFLD" id="SFLDF00271">
    <property type="entry name" value="lipoyl_synthase"/>
    <property type="match status" value="1"/>
</dbReference>
<dbReference type="SFLD" id="SFLDG01058">
    <property type="entry name" value="lipoyl_synthase_like"/>
    <property type="match status" value="1"/>
</dbReference>
<dbReference type="SMART" id="SM00729">
    <property type="entry name" value="Elp3"/>
    <property type="match status" value="1"/>
</dbReference>
<dbReference type="SUPFAM" id="SSF102114">
    <property type="entry name" value="Radical SAM enzymes"/>
    <property type="match status" value="1"/>
</dbReference>
<dbReference type="PROSITE" id="PS51918">
    <property type="entry name" value="RADICAL_SAM"/>
    <property type="match status" value="1"/>
</dbReference>
<reference key="1">
    <citation type="journal article" date="2009" name="Plant Mol. Biol.">
        <title>Insights into corn genes derived from large-scale cDNA sequencing.</title>
        <authorList>
            <person name="Alexandrov N.N."/>
            <person name="Brover V.V."/>
            <person name="Freidin S."/>
            <person name="Troukhan M.E."/>
            <person name="Tatarinova T.V."/>
            <person name="Zhang H."/>
            <person name="Swaller T.J."/>
            <person name="Lu Y.-P."/>
            <person name="Bouck J."/>
            <person name="Flavell R.B."/>
            <person name="Feldmann K.A."/>
        </authorList>
    </citation>
    <scope>NUCLEOTIDE SEQUENCE [LARGE SCALE MRNA]</scope>
</reference>
<feature type="chain" id="PRO_0000398860" description="Lipoyl synthase 1, chloroplastic">
    <location>
        <begin position="1"/>
        <end position="361"/>
    </location>
</feature>
<feature type="domain" description="Radical SAM core" evidence="2">
    <location>
        <begin position="107"/>
        <end position="328"/>
    </location>
</feature>
<feature type="binding site" evidence="1">
    <location>
        <position position="87"/>
    </location>
    <ligand>
        <name>[4Fe-4S] cluster</name>
        <dbReference type="ChEBI" id="CHEBI:49883"/>
        <label>1</label>
    </ligand>
</feature>
<feature type="binding site" evidence="1">
    <location>
        <position position="92"/>
    </location>
    <ligand>
        <name>[4Fe-4S] cluster</name>
        <dbReference type="ChEBI" id="CHEBI:49883"/>
        <label>1</label>
    </ligand>
</feature>
<feature type="binding site" evidence="1">
    <location>
        <position position="98"/>
    </location>
    <ligand>
        <name>[4Fe-4S] cluster</name>
        <dbReference type="ChEBI" id="CHEBI:49883"/>
        <label>1</label>
    </ligand>
</feature>
<feature type="binding site" evidence="1">
    <location>
        <position position="124"/>
    </location>
    <ligand>
        <name>[4Fe-4S] cluster</name>
        <dbReference type="ChEBI" id="CHEBI:49883"/>
        <label>2</label>
        <note>4Fe-4S-S-AdoMet</note>
    </ligand>
</feature>
<feature type="binding site" evidence="1">
    <location>
        <position position="128"/>
    </location>
    <ligand>
        <name>[4Fe-4S] cluster</name>
        <dbReference type="ChEBI" id="CHEBI:49883"/>
        <label>2</label>
        <note>4Fe-4S-S-AdoMet</note>
    </ligand>
</feature>
<feature type="binding site" evidence="1">
    <location>
        <position position="131"/>
    </location>
    <ligand>
        <name>[4Fe-4S] cluster</name>
        <dbReference type="ChEBI" id="CHEBI:49883"/>
        <label>2</label>
        <note>4Fe-4S-S-AdoMet</note>
    </ligand>
</feature>
<feature type="binding site" evidence="1">
    <location>
        <position position="339"/>
    </location>
    <ligand>
        <name>[4Fe-4S] cluster</name>
        <dbReference type="ChEBI" id="CHEBI:49883"/>
        <label>1</label>
    </ligand>
</feature>
<proteinExistence type="evidence at transcript level"/>
<accession>B6TN12</accession>
<gene>
    <name evidence="1" type="primary">LIP1P-1</name>
</gene>
<evidence type="ECO:0000255" key="1">
    <source>
        <dbReference type="HAMAP-Rule" id="MF_03129"/>
    </source>
</evidence>
<evidence type="ECO:0000255" key="2">
    <source>
        <dbReference type="PROSITE-ProRule" id="PRU01266"/>
    </source>
</evidence>
<name>LISC1_MAIZE</name>